<dbReference type="EC" id="1.8.1.4"/>
<dbReference type="EMBL" id="LT708304">
    <property type="protein sequence ID" value="SIT99066.1"/>
    <property type="molecule type" value="Genomic_DNA"/>
</dbReference>
<dbReference type="RefSeq" id="NP_854134.1">
    <property type="nucleotide sequence ID" value="NC_002945.3"/>
</dbReference>
<dbReference type="SMR" id="P66005"/>
<dbReference type="PATRIC" id="fig|233413.5.peg.513"/>
<dbReference type="Proteomes" id="UP000001419">
    <property type="component" value="Chromosome"/>
</dbReference>
<dbReference type="GO" id="GO:0005737">
    <property type="term" value="C:cytoplasm"/>
    <property type="evidence" value="ECO:0007669"/>
    <property type="project" value="UniProtKB-SubCell"/>
</dbReference>
<dbReference type="GO" id="GO:0004148">
    <property type="term" value="F:dihydrolipoyl dehydrogenase (NADH) activity"/>
    <property type="evidence" value="ECO:0007669"/>
    <property type="project" value="UniProtKB-EC"/>
</dbReference>
<dbReference type="GO" id="GO:0050660">
    <property type="term" value="F:flavin adenine dinucleotide binding"/>
    <property type="evidence" value="ECO:0007669"/>
    <property type="project" value="InterPro"/>
</dbReference>
<dbReference type="GO" id="GO:0006103">
    <property type="term" value="P:2-oxoglutarate metabolic process"/>
    <property type="evidence" value="ECO:0007669"/>
    <property type="project" value="TreeGrafter"/>
</dbReference>
<dbReference type="FunFam" id="3.30.390.30:FF:000001">
    <property type="entry name" value="Dihydrolipoyl dehydrogenase"/>
    <property type="match status" value="1"/>
</dbReference>
<dbReference type="FunFam" id="3.50.50.60:FF:000212">
    <property type="entry name" value="Dihydrolipoyl dehydrogenase"/>
    <property type="match status" value="1"/>
</dbReference>
<dbReference type="Gene3D" id="3.30.390.30">
    <property type="match status" value="1"/>
</dbReference>
<dbReference type="Gene3D" id="3.50.50.60">
    <property type="entry name" value="FAD/NAD(P)-binding domain"/>
    <property type="match status" value="2"/>
</dbReference>
<dbReference type="InterPro" id="IPR050151">
    <property type="entry name" value="Class-I_Pyr_Nuc-Dis_Oxidored"/>
</dbReference>
<dbReference type="InterPro" id="IPR036188">
    <property type="entry name" value="FAD/NAD-bd_sf"/>
</dbReference>
<dbReference type="InterPro" id="IPR023753">
    <property type="entry name" value="FAD/NAD-binding_dom"/>
</dbReference>
<dbReference type="InterPro" id="IPR016156">
    <property type="entry name" value="FAD/NAD-linked_Rdtase_dimer_sf"/>
</dbReference>
<dbReference type="InterPro" id="IPR006258">
    <property type="entry name" value="Lipoamide_DH"/>
</dbReference>
<dbReference type="InterPro" id="IPR001100">
    <property type="entry name" value="Pyr_nuc-diS_OxRdtase"/>
</dbReference>
<dbReference type="InterPro" id="IPR004099">
    <property type="entry name" value="Pyr_nucl-diS_OxRdtase_dimer"/>
</dbReference>
<dbReference type="InterPro" id="IPR012999">
    <property type="entry name" value="Pyr_OxRdtase_I_AS"/>
</dbReference>
<dbReference type="NCBIfam" id="TIGR01350">
    <property type="entry name" value="lipoamide_DH"/>
    <property type="match status" value="1"/>
</dbReference>
<dbReference type="PANTHER" id="PTHR22912:SF217">
    <property type="entry name" value="DIHYDROLIPOYL DEHYDROGENASE"/>
    <property type="match status" value="1"/>
</dbReference>
<dbReference type="PANTHER" id="PTHR22912">
    <property type="entry name" value="DISULFIDE OXIDOREDUCTASE"/>
    <property type="match status" value="1"/>
</dbReference>
<dbReference type="Pfam" id="PF07992">
    <property type="entry name" value="Pyr_redox_2"/>
    <property type="match status" value="1"/>
</dbReference>
<dbReference type="Pfam" id="PF02852">
    <property type="entry name" value="Pyr_redox_dim"/>
    <property type="match status" value="1"/>
</dbReference>
<dbReference type="PIRSF" id="PIRSF000350">
    <property type="entry name" value="Mercury_reductase_MerA"/>
    <property type="match status" value="1"/>
</dbReference>
<dbReference type="PRINTS" id="PR00368">
    <property type="entry name" value="FADPNR"/>
</dbReference>
<dbReference type="PRINTS" id="PR00411">
    <property type="entry name" value="PNDRDTASEI"/>
</dbReference>
<dbReference type="SUPFAM" id="SSF51905">
    <property type="entry name" value="FAD/NAD(P)-binding domain"/>
    <property type="match status" value="1"/>
</dbReference>
<dbReference type="SUPFAM" id="SSF55424">
    <property type="entry name" value="FAD/NAD-linked reductases, dimerisation (C-terminal) domain"/>
    <property type="match status" value="1"/>
</dbReference>
<dbReference type="PROSITE" id="PS00076">
    <property type="entry name" value="PYRIDINE_REDOX_1"/>
    <property type="match status" value="1"/>
</dbReference>
<keyword id="KW-0963">Cytoplasm</keyword>
<keyword id="KW-1015">Disulfide bond</keyword>
<keyword id="KW-0274">FAD</keyword>
<keyword id="KW-0285">Flavoprotein</keyword>
<keyword id="KW-0520">NAD</keyword>
<keyword id="KW-0560">Oxidoreductase</keyword>
<keyword id="KW-0676">Redox-active center</keyword>
<keyword id="KW-1185">Reference proteome</keyword>
<organism>
    <name type="scientific">Mycobacterium bovis (strain ATCC BAA-935 / AF2122/97)</name>
    <dbReference type="NCBI Taxonomy" id="233413"/>
    <lineage>
        <taxon>Bacteria</taxon>
        <taxon>Bacillati</taxon>
        <taxon>Actinomycetota</taxon>
        <taxon>Actinomycetes</taxon>
        <taxon>Mycobacteriales</taxon>
        <taxon>Mycobacteriaceae</taxon>
        <taxon>Mycobacterium</taxon>
        <taxon>Mycobacterium tuberculosis complex</taxon>
    </lineage>
</organism>
<name>DLDH_MYCBO</name>
<proteinExistence type="inferred from homology"/>
<accession>P66005</accession>
<accession>A0A1R3XVE1</accession>
<accession>O53747</accession>
<accession>X2BF35</accession>
<evidence type="ECO:0000250" key="1"/>
<evidence type="ECO:0000305" key="2"/>
<sequence length="464" mass="49239">MTHYDVVVLGAGPGGYVAAIRAAQLGLSTAIVEPKYWGGVCLNVGCIPSKALLRNAELVHIFTKDAKAFGISGEVTFDYGIAYDRSRKVAEGRVAGVHFLMKKNKITEIHGYGTFADANTLLVDLNDGGTESVTFDNAIIATGSSTRLVPGTSLSANVVTYEEQILSRELPKSIIIAGAGAIGMEFGYVLKNYGVDVTIVEFLPRALPNEDADVSKEIEKQFKKLGVTILTATKVESIADGGSQVTVTVTKDGVAQELKAEKVLQAIGFAPNVEGYGLDKAGVALTDRKAIGVDDYMRTNVGHIYAIGDVNGLLQLAHVAEAQGVVAAETIAGAETLTLGDHRMLPRATFCQPNVASFGLTEQQARNEGYDVVVAKFPFTANAKAHGVGDPSGFVKLVADAKHGELLGGHLVGHDVAELLPELTLAQRWDLTASELARNVHTHPTMSEALQECFHGLVGHMINF</sequence>
<gene>
    <name type="primary">lpd</name>
    <name type="ordered locus">BQ2027_MB0471</name>
</gene>
<reference key="1">
    <citation type="journal article" date="2003" name="Proc. Natl. Acad. Sci. U.S.A.">
        <title>The complete genome sequence of Mycobacterium bovis.</title>
        <authorList>
            <person name="Garnier T."/>
            <person name="Eiglmeier K."/>
            <person name="Camus J.-C."/>
            <person name="Medina N."/>
            <person name="Mansoor H."/>
            <person name="Pryor M."/>
            <person name="Duthoy S."/>
            <person name="Grondin S."/>
            <person name="Lacroix C."/>
            <person name="Monsempe C."/>
            <person name="Simon S."/>
            <person name="Harris B."/>
            <person name="Atkin R."/>
            <person name="Doggett J."/>
            <person name="Mayes R."/>
            <person name="Keating L."/>
            <person name="Wheeler P.R."/>
            <person name="Parkhill J."/>
            <person name="Barrell B.G."/>
            <person name="Cole S.T."/>
            <person name="Gordon S.V."/>
            <person name="Hewinson R.G."/>
        </authorList>
    </citation>
    <scope>NUCLEOTIDE SEQUENCE [LARGE SCALE GENOMIC DNA]</scope>
    <source>
        <strain>ATCC BAA-935 / AF2122/97</strain>
    </source>
</reference>
<reference key="2">
    <citation type="journal article" date="2017" name="Genome Announc.">
        <title>Updated reference genome sequence and annotation of Mycobacterium bovis AF2122/97.</title>
        <authorList>
            <person name="Malone K.M."/>
            <person name="Farrell D."/>
            <person name="Stuber T.P."/>
            <person name="Schubert O.T."/>
            <person name="Aebersold R."/>
            <person name="Robbe-Austerman S."/>
            <person name="Gordon S.V."/>
        </authorList>
    </citation>
    <scope>NUCLEOTIDE SEQUENCE [LARGE SCALE GENOMIC DNA]</scope>
    <scope>GENOME REANNOTATION</scope>
    <source>
        <strain>ATCC BAA-935 / AF2122/97</strain>
    </source>
</reference>
<protein>
    <recommendedName>
        <fullName>Dihydrolipoyl dehydrogenase</fullName>
        <ecNumber>1.8.1.4</ecNumber>
    </recommendedName>
    <alternativeName>
        <fullName>Dihydrolipoamide dehydrogenase</fullName>
    </alternativeName>
    <alternativeName>
        <fullName>E3 component of alpha-ketoacid dehydrogenase complexes</fullName>
    </alternativeName>
</protein>
<comment type="function">
    <text evidence="1">Lipoamide dehydrogenase is a component of the alpha-ketoacid dehydrogenase complexes. Catalyzes the reoxidation of dihydrolipoyl groups which are covalently attached to the lipoate acyltransferase components (E2) of the complexes (By similarity).</text>
</comment>
<comment type="catalytic activity">
    <reaction>
        <text>N(6)-[(R)-dihydrolipoyl]-L-lysyl-[protein] + NAD(+) = N(6)-[(R)-lipoyl]-L-lysyl-[protein] + NADH + H(+)</text>
        <dbReference type="Rhea" id="RHEA:15045"/>
        <dbReference type="Rhea" id="RHEA-COMP:10474"/>
        <dbReference type="Rhea" id="RHEA-COMP:10475"/>
        <dbReference type="ChEBI" id="CHEBI:15378"/>
        <dbReference type="ChEBI" id="CHEBI:57540"/>
        <dbReference type="ChEBI" id="CHEBI:57945"/>
        <dbReference type="ChEBI" id="CHEBI:83099"/>
        <dbReference type="ChEBI" id="CHEBI:83100"/>
        <dbReference type="EC" id="1.8.1.4"/>
    </reaction>
</comment>
<comment type="cofactor">
    <cofactor evidence="1">
        <name>FAD</name>
        <dbReference type="ChEBI" id="CHEBI:57692"/>
    </cofactor>
    <text evidence="1">Binds 1 FAD per subunit.</text>
</comment>
<comment type="subunit">
    <text evidence="1">Homodimer. Part of the PDH complex, consisting of multiple copies of AceE (E1), DlaT (E2) and Lpd (E3), and of the BCKADH complex, consisting of multiple copies of BkdA/BkdB (E1), BkdC (E2) and Lpd (E3).</text>
</comment>
<comment type="subcellular location">
    <subcellularLocation>
        <location evidence="2">Cytoplasm</location>
    </subcellularLocation>
</comment>
<comment type="miscellaneous">
    <text>The active site is a redox-active disulfide bond.</text>
</comment>
<comment type="similarity">
    <text evidence="2">Belongs to the class-I pyridine nucleotide-disulfide oxidoreductase family.</text>
</comment>
<feature type="chain" id="PRO_0000068035" description="Dihydrolipoyl dehydrogenase">
    <location>
        <begin position="1"/>
        <end position="464"/>
    </location>
</feature>
<feature type="active site" description="Proton acceptor" evidence="1">
    <location>
        <position position="443"/>
    </location>
</feature>
<feature type="binding site" evidence="1">
    <location>
        <begin position="33"/>
        <end position="41"/>
    </location>
    <ligand>
        <name>FAD</name>
        <dbReference type="ChEBI" id="CHEBI:57692"/>
    </ligand>
</feature>
<feature type="binding site" evidence="1">
    <location>
        <position position="50"/>
    </location>
    <ligand>
        <name>FAD</name>
        <dbReference type="ChEBI" id="CHEBI:57692"/>
    </ligand>
</feature>
<feature type="binding site" evidence="1">
    <location>
        <position position="113"/>
    </location>
    <ligand>
        <name>FAD</name>
        <dbReference type="ChEBI" id="CHEBI:57692"/>
    </ligand>
</feature>
<feature type="binding site" evidence="1">
    <location>
        <begin position="178"/>
        <end position="182"/>
    </location>
    <ligand>
        <name>NAD(+)</name>
        <dbReference type="ChEBI" id="CHEBI:57540"/>
    </ligand>
</feature>
<feature type="binding site" evidence="1">
    <location>
        <position position="201"/>
    </location>
    <ligand>
        <name>NAD(+)</name>
        <dbReference type="ChEBI" id="CHEBI:57540"/>
    </ligand>
</feature>
<feature type="binding site" evidence="1">
    <location>
        <begin position="266"/>
        <end position="269"/>
    </location>
    <ligand>
        <name>NAD(+)</name>
        <dbReference type="ChEBI" id="CHEBI:57540"/>
    </ligand>
</feature>
<feature type="binding site" evidence="1">
    <location>
        <position position="309"/>
    </location>
    <ligand>
        <name>FAD</name>
        <dbReference type="ChEBI" id="CHEBI:57692"/>
    </ligand>
</feature>
<feature type="binding site" evidence="1">
    <location>
        <position position="317"/>
    </location>
    <ligand>
        <name>FAD</name>
        <dbReference type="ChEBI" id="CHEBI:57692"/>
    </ligand>
</feature>
<feature type="disulfide bond" description="Redox-active" evidence="1">
    <location>
        <begin position="41"/>
        <end position="46"/>
    </location>
</feature>